<organism>
    <name type="scientific">Caenorhabditis elegans</name>
    <dbReference type="NCBI Taxonomy" id="6239"/>
    <lineage>
        <taxon>Eukaryota</taxon>
        <taxon>Metazoa</taxon>
        <taxon>Ecdysozoa</taxon>
        <taxon>Nematoda</taxon>
        <taxon>Chromadorea</taxon>
        <taxon>Rhabditida</taxon>
        <taxon>Rhabditina</taxon>
        <taxon>Rhabditomorpha</taxon>
        <taxon>Rhabditoidea</taxon>
        <taxon>Rhabditidae</taxon>
        <taxon>Peloderinae</taxon>
        <taxon>Caenorhabditis</taxon>
    </lineage>
</organism>
<evidence type="ECO:0000256" key="1">
    <source>
        <dbReference type="SAM" id="MobiDB-lite"/>
    </source>
</evidence>
<evidence type="ECO:0000269" key="2">
    <source>
    </source>
</evidence>
<evidence type="ECO:0000305" key="3"/>
<evidence type="ECO:0000312" key="4">
    <source>
        <dbReference type="WormBase" id="K04G11.4"/>
    </source>
</evidence>
<protein>
    <recommendedName>
        <fullName evidence="3">WD repeat-containing protein wdr-5.2</fullName>
    </recommendedName>
</protein>
<dbReference type="EMBL" id="Z78544">
    <property type="protein sequence ID" value="CAB01760.1"/>
    <property type="molecule type" value="Genomic_DNA"/>
</dbReference>
<dbReference type="PIR" id="T23317">
    <property type="entry name" value="T23317"/>
</dbReference>
<dbReference type="RefSeq" id="NP_510394.1">
    <property type="nucleotide sequence ID" value="NM_077993.5"/>
</dbReference>
<dbReference type="SMR" id="Q93847"/>
<dbReference type="FunCoup" id="Q93847">
    <property type="interactions" value="5"/>
</dbReference>
<dbReference type="STRING" id="6239.K04G11.4.1"/>
<dbReference type="PaxDb" id="6239-K04G11.4"/>
<dbReference type="PeptideAtlas" id="Q93847"/>
<dbReference type="EnsemblMetazoa" id="K04G11.4.1">
    <property type="protein sequence ID" value="K04G11.4.1"/>
    <property type="gene ID" value="WBGene00010572"/>
</dbReference>
<dbReference type="GeneID" id="181540"/>
<dbReference type="KEGG" id="cel:CELE_K04G11.4"/>
<dbReference type="UCSC" id="K04G11.4">
    <property type="organism name" value="c. elegans"/>
</dbReference>
<dbReference type="AGR" id="WB:WBGene00010572"/>
<dbReference type="CTD" id="181540"/>
<dbReference type="WormBase" id="K04G11.4">
    <property type="protein sequence ID" value="CE11748"/>
    <property type="gene ID" value="WBGene00010572"/>
    <property type="gene designation" value="wdr-5.2"/>
</dbReference>
<dbReference type="eggNOG" id="KOG0266">
    <property type="taxonomic scope" value="Eukaryota"/>
</dbReference>
<dbReference type="HOGENOM" id="CLU_000288_57_1_1"/>
<dbReference type="InParanoid" id="Q93847"/>
<dbReference type="OMA" id="IKIWGTH"/>
<dbReference type="OrthoDB" id="1367865at2759"/>
<dbReference type="PhylomeDB" id="Q93847"/>
<dbReference type="Reactome" id="R-CEL-2565942">
    <property type="pathway name" value="Regulation of PLK1 Activity at G2/M Transition"/>
</dbReference>
<dbReference type="Reactome" id="R-CEL-8951664">
    <property type="pathway name" value="Neddylation"/>
</dbReference>
<dbReference type="Reactome" id="R-CEL-983168">
    <property type="pathway name" value="Antigen processing: Ubiquitination &amp; Proteasome degradation"/>
</dbReference>
<dbReference type="PRO" id="PR:Q93847"/>
<dbReference type="Proteomes" id="UP000001940">
    <property type="component" value="Chromosome X"/>
</dbReference>
<dbReference type="Bgee" id="WBGene00010572">
    <property type="expression patterns" value="Expressed in pharyngeal muscle cell (C elegans) and 3 other cell types or tissues"/>
</dbReference>
<dbReference type="GO" id="GO:1904115">
    <property type="term" value="C:axon cytoplasm"/>
    <property type="evidence" value="ECO:0007669"/>
    <property type="project" value="GOC"/>
</dbReference>
<dbReference type="GO" id="GO:0005881">
    <property type="term" value="C:cytoplasmic microtubule"/>
    <property type="evidence" value="ECO:0000318"/>
    <property type="project" value="GO_Central"/>
</dbReference>
<dbReference type="GO" id="GO:0000776">
    <property type="term" value="C:kinetochore"/>
    <property type="evidence" value="ECO:0000318"/>
    <property type="project" value="GO_Central"/>
</dbReference>
<dbReference type="GO" id="GO:0005875">
    <property type="term" value="C:microtubule associated complex"/>
    <property type="evidence" value="ECO:0000318"/>
    <property type="project" value="GO_Central"/>
</dbReference>
<dbReference type="GO" id="GO:0043005">
    <property type="term" value="C:neuron projection"/>
    <property type="evidence" value="ECO:0000318"/>
    <property type="project" value="GO_Central"/>
</dbReference>
<dbReference type="GO" id="GO:0043025">
    <property type="term" value="C:neuronal cell body"/>
    <property type="evidence" value="ECO:0000318"/>
    <property type="project" value="GO_Central"/>
</dbReference>
<dbReference type="GO" id="GO:0005635">
    <property type="term" value="C:nuclear envelope"/>
    <property type="evidence" value="ECO:0000318"/>
    <property type="project" value="GO_Central"/>
</dbReference>
<dbReference type="GO" id="GO:1990234">
    <property type="term" value="C:transferase complex"/>
    <property type="evidence" value="ECO:0007669"/>
    <property type="project" value="UniProtKB-ARBA"/>
</dbReference>
<dbReference type="GO" id="GO:0070840">
    <property type="term" value="F:dynein complex binding"/>
    <property type="evidence" value="ECO:0000318"/>
    <property type="project" value="GO_Central"/>
</dbReference>
<dbReference type="GO" id="GO:0051010">
    <property type="term" value="F:microtubule plus-end binding"/>
    <property type="evidence" value="ECO:0000318"/>
    <property type="project" value="GO_Central"/>
</dbReference>
<dbReference type="GO" id="GO:0048854">
    <property type="term" value="P:brain morphogenesis"/>
    <property type="evidence" value="ECO:0000318"/>
    <property type="project" value="GO_Central"/>
</dbReference>
<dbReference type="GO" id="GO:0000132">
    <property type="term" value="P:establishment of mitotic spindle orientation"/>
    <property type="evidence" value="ECO:0000318"/>
    <property type="project" value="GO_Central"/>
</dbReference>
<dbReference type="GO" id="GO:0007281">
    <property type="term" value="P:germ cell development"/>
    <property type="evidence" value="ECO:0000318"/>
    <property type="project" value="GO_Central"/>
</dbReference>
<dbReference type="GO" id="GO:0031023">
    <property type="term" value="P:microtubule organizing center organization"/>
    <property type="evidence" value="ECO:0000318"/>
    <property type="project" value="GO_Central"/>
</dbReference>
<dbReference type="GO" id="GO:0007097">
    <property type="term" value="P:nuclear migration"/>
    <property type="evidence" value="ECO:0000318"/>
    <property type="project" value="GO_Central"/>
</dbReference>
<dbReference type="GO" id="GO:0008090">
    <property type="term" value="P:retrograde axonal transport"/>
    <property type="evidence" value="ECO:0000318"/>
    <property type="project" value="GO_Central"/>
</dbReference>
<dbReference type="GO" id="GO:0047496">
    <property type="term" value="P:vesicle transport along microtubule"/>
    <property type="evidence" value="ECO:0000318"/>
    <property type="project" value="GO_Central"/>
</dbReference>
<dbReference type="CDD" id="cd00200">
    <property type="entry name" value="WD40"/>
    <property type="match status" value="1"/>
</dbReference>
<dbReference type="FunFam" id="2.130.10.10:FF:000228">
    <property type="entry name" value="COMPASS-like H3K4 histone methylase component WDR5A"/>
    <property type="match status" value="1"/>
</dbReference>
<dbReference type="Gene3D" id="2.130.10.10">
    <property type="entry name" value="YVTN repeat-like/Quinoprotein amine dehydrogenase"/>
    <property type="match status" value="1"/>
</dbReference>
<dbReference type="InterPro" id="IPR020472">
    <property type="entry name" value="G-protein_beta_WD-40_rep"/>
</dbReference>
<dbReference type="InterPro" id="IPR015943">
    <property type="entry name" value="WD40/YVTN_repeat-like_dom_sf"/>
</dbReference>
<dbReference type="InterPro" id="IPR019775">
    <property type="entry name" value="WD40_repeat_CS"/>
</dbReference>
<dbReference type="InterPro" id="IPR036322">
    <property type="entry name" value="WD40_repeat_dom_sf"/>
</dbReference>
<dbReference type="InterPro" id="IPR001680">
    <property type="entry name" value="WD40_rpt"/>
</dbReference>
<dbReference type="PANTHER" id="PTHR22847:SF637">
    <property type="entry name" value="WD REPEAT DOMAIN 5B"/>
    <property type="match status" value="1"/>
</dbReference>
<dbReference type="PANTHER" id="PTHR22847">
    <property type="entry name" value="WD40 REPEAT PROTEIN"/>
    <property type="match status" value="1"/>
</dbReference>
<dbReference type="Pfam" id="PF25175">
    <property type="entry name" value="Beta-prop_WDR5"/>
    <property type="match status" value="1"/>
</dbReference>
<dbReference type="PRINTS" id="PR00320">
    <property type="entry name" value="GPROTEINBRPT"/>
</dbReference>
<dbReference type="SMART" id="SM00320">
    <property type="entry name" value="WD40"/>
    <property type="match status" value="7"/>
</dbReference>
<dbReference type="SUPFAM" id="SSF50978">
    <property type="entry name" value="WD40 repeat-like"/>
    <property type="match status" value="1"/>
</dbReference>
<dbReference type="PROSITE" id="PS00678">
    <property type="entry name" value="WD_REPEATS_1"/>
    <property type="match status" value="2"/>
</dbReference>
<dbReference type="PROSITE" id="PS50082">
    <property type="entry name" value="WD_REPEATS_2"/>
    <property type="match status" value="6"/>
</dbReference>
<dbReference type="PROSITE" id="PS50294">
    <property type="entry name" value="WD_REPEATS_REGION"/>
    <property type="match status" value="1"/>
</dbReference>
<name>WDR52_CAEEL</name>
<keyword id="KW-1185">Reference proteome</keyword>
<keyword id="KW-0677">Repeat</keyword>
<keyword id="KW-0853">WD repeat</keyword>
<feature type="chain" id="PRO_0000051512" description="WD repeat-containing protein wdr-5.2" evidence="3">
    <location>
        <begin position="1"/>
        <end position="395"/>
    </location>
</feature>
<feature type="repeat" description="WD 1">
    <location>
        <begin position="105"/>
        <end position="135"/>
    </location>
</feature>
<feature type="repeat" description="WD 2">
    <location>
        <begin position="146"/>
        <end position="176"/>
    </location>
</feature>
<feature type="repeat" description="WD 3">
    <location>
        <begin position="188"/>
        <end position="218"/>
    </location>
</feature>
<feature type="repeat" description="WD 4">
    <location>
        <begin position="230"/>
        <end position="260"/>
    </location>
</feature>
<feature type="repeat" description="WD 5">
    <location>
        <begin position="274"/>
        <end position="303"/>
    </location>
</feature>
<feature type="repeat" description="WD 6">
    <location>
        <begin position="315"/>
        <end position="348"/>
    </location>
</feature>
<feature type="repeat" description="WD 7">
    <location>
        <begin position="360"/>
        <end position="392"/>
    </location>
</feature>
<feature type="region of interest" description="Disordered" evidence="1">
    <location>
        <begin position="1"/>
        <end position="31"/>
    </location>
</feature>
<feature type="region of interest" description="Disordered" evidence="1">
    <location>
        <begin position="63"/>
        <end position="83"/>
    </location>
</feature>
<feature type="compositionally biased region" description="Polar residues" evidence="1">
    <location>
        <begin position="63"/>
        <end position="81"/>
    </location>
</feature>
<sequence length="395" mass="43128">MEQRGRASQDEEQAIVGAETGSQPSLPVSPMRPIIAPSPAMVLPTPGHGMGIPQFGPVGLPAQASTPMLSSTPGPSYSSAPTPMPNPSAANLWPTYKLVAEIPNAHKKSISGIKFSPDGRYMGSGSADCSIKIWRMDFVYEKTLMGHRLGINEFSWSSDSKLIVSCSDDKLVKVFDVSSGRCVKTLKGHTNYVFCCCFNPSGTLIASGSFDETIRIWCARNGNTIFSIPGHEDPVSSVCFNRDGAYLASGSYDGIVRIWDSTTGTCVKTLIDEEHPPITHVKFSPNGKYILASNLNNTLKLWDYQKLRVLKEYTGHENSKYCVAANFSVTGGKWIVSGSEDHKVYIWNLQTREILQTLDGHNTAVMCTDCHPGQNIIASAALEPDMRIKIWRSQS</sequence>
<gene>
    <name evidence="4" type="primary">wdr-5.2</name>
    <name evidence="4" type="synonym">swd-3.2</name>
    <name evidence="4" type="ORF">K04G11.4</name>
</gene>
<comment type="function">
    <text evidence="2">Sex determining protein required in the germline to promote the spermatogenesis to oogenesis switch during the late larval stages of development. Acts with the sex determining factor tra-1, and redundantly with wdr-5.1, to regulate fog-3 expression, which in turn determines germ cell fate. Not required for methylation of histone H3 'Lys-4'.</text>
</comment>
<comment type="disruption phenotype">
    <text evidence="2">No obvious phenotype at 20 degrees Celsius or 25 degrees Celsius. At 20 and 25 degrees Celsius, double knockdown mutants with wdr-5.1 have increased fog-3 expression. At 25 degrees Celsius, these mutants have increased fog-1 expression, reduced brood size accompanied by 42% embryonic lethality with 100% of the surviving progeny being sterile. Surviving progeny display defective spermatogenesis to oogenesis transition with 88% of the gonads only containing sperm. The remaining germ cells in the gonads switch to oogenesis, but the oocytes display either an endoreplication or endomitotic phenotype. Germ cells also have increased expression of the sex determining factor tra-1 in the cytoplasm and as a result there is reduced binding of tra-1 to the fog-3 promoter. No detectable defects in histone H3 'Lys-4' di- or tri-methylation in embryos or adults germ cells at 20 or 25 degrees Celsius.</text>
</comment>
<accession>Q93847</accession>
<reference key="1">
    <citation type="journal article" date="1998" name="Science">
        <title>Genome sequence of the nematode C. elegans: a platform for investigating biology.</title>
        <authorList>
            <consortium name="The C. elegans sequencing consortium"/>
        </authorList>
    </citation>
    <scope>NUCLEOTIDE SEQUENCE [LARGE SCALE GENOMIC DNA]</scope>
    <source>
        <strain>Bristol N2</strain>
    </source>
</reference>
<reference key="2">
    <citation type="journal article" date="2014" name="Nucleic Acids Res.">
        <title>A role for WDR5 in TRA-1/Gli mediated transcriptional control of the sperm/oocyte switch in C. elegans.</title>
        <authorList>
            <person name="Li T."/>
            <person name="Kelly W.G."/>
        </authorList>
    </citation>
    <scope>FUNCTION</scope>
    <scope>DISRUPTION PHENOTYPE</scope>
</reference>
<proteinExistence type="predicted"/>